<sequence>MSKFLRGISSISSASLKARASNFGVFHGVCSARNLHQSRLCLNVSKIPETYEEEKEIIDDINSKLPEKDILSSTRLRNIGVSAHIDSGKTTFTERVLFYTGRIKAIHEVRGRDAVGATMDHMDLEREKGITIQSAATFCSWDKDNKDYHFNLIDTPGHIDFTIEVERALRVLDGAVLVVCAVAGVQSQTVTVDRQMRRYNIPRVTFINKMDRMGSDPFRAIEQVNLKLKTPAAAIQVPIGAESELKGVVNIIDRVALYNEGSQGEEIRADTNIPEDLKDLVEEKRALLIETLADVDEEIADVYLEGEEPSVEQIKAAIRRATIARRFTPVLMGSALANKGVQNVLDAVVDYLPQPNEILNTGLDVSTEEEKRVNLIPSSAAPFVGLAFKLEEGKYGQLTYIRVYQGKLKKGSYMNHLKSGKKVKVSRLVRMHSNDMEDVDEVGAGEICATFGIDCASGDTFIGQNSEQQIAMSSMFVPEAVISLSIAPKAKDNGSFSKAMNRFQKEDPTFRVKYDAESKETIISGMGELHLEIYVERMKREYGIDCITGKPQVAYREAITAPTSFDYTHKKQSGGSGQYARVVGEMKPLDGENKFSQHIVGGKIPEKFLFACSKGFDDSLEKGPLIGHRVLGAHMHINDGQTHVVDSSELSFRTATHGAFKQAFLNAQPVILEPIMSVEISAPNEFQGTVVGLVNKIGGMIMETVNGQDEFTVTAECSLNSMFGFSTSLRACTQGKGEFTLEFNKYAQCAPHLQKQLIAEHEKKLQTKK</sequence>
<comment type="function">
    <text evidence="1">Mitochondrial GTPase that catalyzes the GTP-dependent ribosomal translocation step during translation elongation. During this step, the ribosome changes from the pre-translocational (PRE) to the post-translocational (POST) state as the newly formed A-site-bound peptidyl-tRNA and P-site-bound deacylated tRNA move to the P and E sites, respectively. Catalyzes the coordinated movement of the two tRNA molecules, the mRNA and conformational changes in the ribosome.</text>
</comment>
<comment type="pathway">
    <text evidence="1">Protein biosynthesis; polypeptide chain elongation.</text>
</comment>
<comment type="subcellular location">
    <subcellularLocation>
        <location evidence="1">Mitochondrion</location>
    </subcellularLocation>
</comment>
<comment type="similarity">
    <text evidence="2">Belongs to the TRAFAC class translation factor GTPase superfamily. Classic translation factor GTPase family. EF-G/EF-2 subfamily.</text>
</comment>
<accession>Q6BPD3</accession>
<evidence type="ECO:0000255" key="1">
    <source>
        <dbReference type="HAMAP-Rule" id="MF_03061"/>
    </source>
</evidence>
<evidence type="ECO:0000305" key="2"/>
<reference key="1">
    <citation type="journal article" date="2004" name="Nature">
        <title>Genome evolution in yeasts.</title>
        <authorList>
            <person name="Dujon B."/>
            <person name="Sherman D."/>
            <person name="Fischer G."/>
            <person name="Durrens P."/>
            <person name="Casaregola S."/>
            <person name="Lafontaine I."/>
            <person name="de Montigny J."/>
            <person name="Marck C."/>
            <person name="Neuveglise C."/>
            <person name="Talla E."/>
            <person name="Goffard N."/>
            <person name="Frangeul L."/>
            <person name="Aigle M."/>
            <person name="Anthouard V."/>
            <person name="Babour A."/>
            <person name="Barbe V."/>
            <person name="Barnay S."/>
            <person name="Blanchin S."/>
            <person name="Beckerich J.-M."/>
            <person name="Beyne E."/>
            <person name="Bleykasten C."/>
            <person name="Boisrame A."/>
            <person name="Boyer J."/>
            <person name="Cattolico L."/>
            <person name="Confanioleri F."/>
            <person name="de Daruvar A."/>
            <person name="Despons L."/>
            <person name="Fabre E."/>
            <person name="Fairhead C."/>
            <person name="Ferry-Dumazet H."/>
            <person name="Groppi A."/>
            <person name="Hantraye F."/>
            <person name="Hennequin C."/>
            <person name="Jauniaux N."/>
            <person name="Joyet P."/>
            <person name="Kachouri R."/>
            <person name="Kerrest A."/>
            <person name="Koszul R."/>
            <person name="Lemaire M."/>
            <person name="Lesur I."/>
            <person name="Ma L."/>
            <person name="Muller H."/>
            <person name="Nicaud J.-M."/>
            <person name="Nikolski M."/>
            <person name="Oztas S."/>
            <person name="Ozier-Kalogeropoulos O."/>
            <person name="Pellenz S."/>
            <person name="Potier S."/>
            <person name="Richard G.-F."/>
            <person name="Straub M.-L."/>
            <person name="Suleau A."/>
            <person name="Swennen D."/>
            <person name="Tekaia F."/>
            <person name="Wesolowski-Louvel M."/>
            <person name="Westhof E."/>
            <person name="Wirth B."/>
            <person name="Zeniou-Meyer M."/>
            <person name="Zivanovic Y."/>
            <person name="Bolotin-Fukuhara M."/>
            <person name="Thierry A."/>
            <person name="Bouchier C."/>
            <person name="Caudron B."/>
            <person name="Scarpelli C."/>
            <person name="Gaillardin C."/>
            <person name="Weissenbach J."/>
            <person name="Wincker P."/>
            <person name="Souciet J.-L."/>
        </authorList>
    </citation>
    <scope>NUCLEOTIDE SEQUENCE [LARGE SCALE GENOMIC DNA]</scope>
    <source>
        <strain>ATCC 36239 / CBS 767 / BCRC 21394 / JCM 1990 / NBRC 0083 / IGC 2968</strain>
    </source>
</reference>
<feature type="transit peptide" description="Mitochondrion" evidence="1">
    <location>
        <begin position="1"/>
        <end position="42"/>
    </location>
</feature>
<feature type="chain" id="PRO_0000385571" description="Elongation factor G, mitochondrial">
    <location>
        <begin position="43"/>
        <end position="769"/>
    </location>
</feature>
<feature type="domain" description="tr-type G">
    <location>
        <begin position="74"/>
        <end position="356"/>
    </location>
</feature>
<feature type="binding site" evidence="1">
    <location>
        <begin position="83"/>
        <end position="90"/>
    </location>
    <ligand>
        <name>GTP</name>
        <dbReference type="ChEBI" id="CHEBI:37565"/>
    </ligand>
</feature>
<feature type="binding site" evidence="1">
    <location>
        <begin position="154"/>
        <end position="158"/>
    </location>
    <ligand>
        <name>GTP</name>
        <dbReference type="ChEBI" id="CHEBI:37565"/>
    </ligand>
</feature>
<feature type="binding site" evidence="1">
    <location>
        <begin position="208"/>
        <end position="211"/>
    </location>
    <ligand>
        <name>GTP</name>
        <dbReference type="ChEBI" id="CHEBI:37565"/>
    </ligand>
</feature>
<name>EFGM_DEBHA</name>
<gene>
    <name evidence="1" type="primary">MEF1</name>
    <name type="ordered locus">DEHA2E14520g</name>
</gene>
<keyword id="KW-0251">Elongation factor</keyword>
<keyword id="KW-0342">GTP-binding</keyword>
<keyword id="KW-0496">Mitochondrion</keyword>
<keyword id="KW-0547">Nucleotide-binding</keyword>
<keyword id="KW-0648">Protein biosynthesis</keyword>
<keyword id="KW-1185">Reference proteome</keyword>
<keyword id="KW-0809">Transit peptide</keyword>
<protein>
    <recommendedName>
        <fullName evidence="1">Elongation factor G, mitochondrial</fullName>
        <shortName evidence="1">EF-Gmt</shortName>
    </recommendedName>
    <alternativeName>
        <fullName evidence="1">Elongation factor G 1, mitochondrial</fullName>
        <shortName evidence="1">mEF-G 1</shortName>
    </alternativeName>
    <alternativeName>
        <fullName evidence="1">Elongation factor G1</fullName>
    </alternativeName>
</protein>
<organism>
    <name type="scientific">Debaryomyces hansenii (strain ATCC 36239 / CBS 767 / BCRC 21394 / JCM 1990 / NBRC 0083 / IGC 2968)</name>
    <name type="common">Yeast</name>
    <name type="synonym">Torulaspora hansenii</name>
    <dbReference type="NCBI Taxonomy" id="284592"/>
    <lineage>
        <taxon>Eukaryota</taxon>
        <taxon>Fungi</taxon>
        <taxon>Dikarya</taxon>
        <taxon>Ascomycota</taxon>
        <taxon>Saccharomycotina</taxon>
        <taxon>Pichiomycetes</taxon>
        <taxon>Debaryomycetaceae</taxon>
        <taxon>Debaryomyces</taxon>
    </lineage>
</organism>
<dbReference type="EMBL" id="CR382137">
    <property type="protein sequence ID" value="CAG88181.1"/>
    <property type="molecule type" value="Genomic_DNA"/>
</dbReference>
<dbReference type="RefSeq" id="XP_459937.1">
    <property type="nucleotide sequence ID" value="XM_459937.1"/>
</dbReference>
<dbReference type="SMR" id="Q6BPD3"/>
<dbReference type="FunCoup" id="Q6BPD3">
    <property type="interactions" value="691"/>
</dbReference>
<dbReference type="STRING" id="284592.Q6BPD3"/>
<dbReference type="GeneID" id="2902377"/>
<dbReference type="KEGG" id="dha:DEHA2E14520g"/>
<dbReference type="VEuPathDB" id="FungiDB:DEHA2E14520g"/>
<dbReference type="eggNOG" id="KOG0465">
    <property type="taxonomic scope" value="Eukaryota"/>
</dbReference>
<dbReference type="HOGENOM" id="CLU_002794_4_0_1"/>
<dbReference type="InParanoid" id="Q6BPD3"/>
<dbReference type="OMA" id="GQFAKVQ"/>
<dbReference type="OrthoDB" id="198619at2759"/>
<dbReference type="UniPathway" id="UPA00345"/>
<dbReference type="Proteomes" id="UP000000599">
    <property type="component" value="Chromosome E"/>
</dbReference>
<dbReference type="GO" id="GO:0005739">
    <property type="term" value="C:mitochondrion"/>
    <property type="evidence" value="ECO:0007669"/>
    <property type="project" value="UniProtKB-SubCell"/>
</dbReference>
<dbReference type="GO" id="GO:0005525">
    <property type="term" value="F:GTP binding"/>
    <property type="evidence" value="ECO:0007669"/>
    <property type="project" value="UniProtKB-UniRule"/>
</dbReference>
<dbReference type="GO" id="GO:0003924">
    <property type="term" value="F:GTPase activity"/>
    <property type="evidence" value="ECO:0007669"/>
    <property type="project" value="UniProtKB-UniRule"/>
</dbReference>
<dbReference type="GO" id="GO:0003746">
    <property type="term" value="F:translation elongation factor activity"/>
    <property type="evidence" value="ECO:0007669"/>
    <property type="project" value="UniProtKB-UniRule"/>
</dbReference>
<dbReference type="GO" id="GO:0070125">
    <property type="term" value="P:mitochondrial translational elongation"/>
    <property type="evidence" value="ECO:0007669"/>
    <property type="project" value="UniProtKB-UniRule"/>
</dbReference>
<dbReference type="CDD" id="cd01886">
    <property type="entry name" value="EF-G"/>
    <property type="match status" value="1"/>
</dbReference>
<dbReference type="CDD" id="cd16262">
    <property type="entry name" value="EFG_III"/>
    <property type="match status" value="1"/>
</dbReference>
<dbReference type="CDD" id="cd01434">
    <property type="entry name" value="EFG_mtEFG1_IV"/>
    <property type="match status" value="1"/>
</dbReference>
<dbReference type="CDD" id="cd04091">
    <property type="entry name" value="mtEFG1_II_like"/>
    <property type="match status" value="1"/>
</dbReference>
<dbReference type="FunFam" id="3.30.230.10:FF:000003">
    <property type="entry name" value="Elongation factor G"/>
    <property type="match status" value="1"/>
</dbReference>
<dbReference type="FunFam" id="3.30.70.870:FF:000001">
    <property type="entry name" value="Elongation factor G"/>
    <property type="match status" value="1"/>
</dbReference>
<dbReference type="FunFam" id="2.40.30.10:FF:000022">
    <property type="entry name" value="Elongation factor G, mitochondrial"/>
    <property type="match status" value="1"/>
</dbReference>
<dbReference type="FunFam" id="3.30.70.240:FF:000015">
    <property type="entry name" value="Elongation factor G, mitochondrial"/>
    <property type="match status" value="1"/>
</dbReference>
<dbReference type="FunFam" id="3.40.50.300:FF:000558">
    <property type="entry name" value="Elongation factor G, mitochondrial"/>
    <property type="match status" value="1"/>
</dbReference>
<dbReference type="Gene3D" id="3.30.230.10">
    <property type="match status" value="1"/>
</dbReference>
<dbReference type="Gene3D" id="3.30.70.240">
    <property type="match status" value="1"/>
</dbReference>
<dbReference type="Gene3D" id="3.30.70.870">
    <property type="entry name" value="Elongation Factor G (Translational Gtpase), domain 3"/>
    <property type="match status" value="1"/>
</dbReference>
<dbReference type="Gene3D" id="3.40.50.300">
    <property type="entry name" value="P-loop containing nucleotide triphosphate hydrolases"/>
    <property type="match status" value="1"/>
</dbReference>
<dbReference type="Gene3D" id="2.40.30.10">
    <property type="entry name" value="Translation factors"/>
    <property type="match status" value="1"/>
</dbReference>
<dbReference type="HAMAP" id="MF_00054_B">
    <property type="entry name" value="EF_G_EF_2_B"/>
    <property type="match status" value="1"/>
</dbReference>
<dbReference type="InterPro" id="IPR041095">
    <property type="entry name" value="EFG_II"/>
</dbReference>
<dbReference type="InterPro" id="IPR009022">
    <property type="entry name" value="EFG_III"/>
</dbReference>
<dbReference type="InterPro" id="IPR035647">
    <property type="entry name" value="EFG_III/V"/>
</dbReference>
<dbReference type="InterPro" id="IPR047872">
    <property type="entry name" value="EFG_IV"/>
</dbReference>
<dbReference type="InterPro" id="IPR000640">
    <property type="entry name" value="EFG_V-like"/>
</dbReference>
<dbReference type="InterPro" id="IPR004161">
    <property type="entry name" value="EFTu-like_2"/>
</dbReference>
<dbReference type="InterPro" id="IPR027417">
    <property type="entry name" value="P-loop_NTPase"/>
</dbReference>
<dbReference type="InterPro" id="IPR020568">
    <property type="entry name" value="Ribosomal_Su5_D2-typ_SF"/>
</dbReference>
<dbReference type="InterPro" id="IPR014721">
    <property type="entry name" value="Ribsml_uS5_D2-typ_fold_subgr"/>
</dbReference>
<dbReference type="InterPro" id="IPR005225">
    <property type="entry name" value="Small_GTP-bd"/>
</dbReference>
<dbReference type="InterPro" id="IPR000795">
    <property type="entry name" value="T_Tr_GTP-bd_dom"/>
</dbReference>
<dbReference type="InterPro" id="IPR009000">
    <property type="entry name" value="Transl_B-barrel_sf"/>
</dbReference>
<dbReference type="InterPro" id="IPR004540">
    <property type="entry name" value="Transl_elong_EFG/EF2"/>
</dbReference>
<dbReference type="InterPro" id="IPR005517">
    <property type="entry name" value="Transl_elong_EFG/EF2_IV"/>
</dbReference>
<dbReference type="NCBIfam" id="TIGR00484">
    <property type="entry name" value="EF-G"/>
    <property type="match status" value="1"/>
</dbReference>
<dbReference type="NCBIfam" id="NF009381">
    <property type="entry name" value="PRK12740.1-5"/>
    <property type="match status" value="1"/>
</dbReference>
<dbReference type="NCBIfam" id="TIGR00231">
    <property type="entry name" value="small_GTP"/>
    <property type="match status" value="1"/>
</dbReference>
<dbReference type="PANTHER" id="PTHR43636">
    <property type="entry name" value="ELONGATION FACTOR G, MITOCHONDRIAL"/>
    <property type="match status" value="1"/>
</dbReference>
<dbReference type="PANTHER" id="PTHR43636:SF2">
    <property type="entry name" value="ELONGATION FACTOR G, MITOCHONDRIAL"/>
    <property type="match status" value="1"/>
</dbReference>
<dbReference type="Pfam" id="PF00679">
    <property type="entry name" value="EFG_C"/>
    <property type="match status" value="1"/>
</dbReference>
<dbReference type="Pfam" id="PF14492">
    <property type="entry name" value="EFG_III"/>
    <property type="match status" value="1"/>
</dbReference>
<dbReference type="Pfam" id="PF03764">
    <property type="entry name" value="EFG_IV"/>
    <property type="match status" value="1"/>
</dbReference>
<dbReference type="Pfam" id="PF00009">
    <property type="entry name" value="GTP_EFTU"/>
    <property type="match status" value="1"/>
</dbReference>
<dbReference type="Pfam" id="PF03144">
    <property type="entry name" value="GTP_EFTU_D2"/>
    <property type="match status" value="1"/>
</dbReference>
<dbReference type="PRINTS" id="PR00315">
    <property type="entry name" value="ELONGATNFCT"/>
</dbReference>
<dbReference type="SMART" id="SM00838">
    <property type="entry name" value="EFG_C"/>
    <property type="match status" value="1"/>
</dbReference>
<dbReference type="SMART" id="SM00889">
    <property type="entry name" value="EFG_IV"/>
    <property type="match status" value="1"/>
</dbReference>
<dbReference type="SUPFAM" id="SSF54980">
    <property type="entry name" value="EF-G C-terminal domain-like"/>
    <property type="match status" value="2"/>
</dbReference>
<dbReference type="SUPFAM" id="SSF52540">
    <property type="entry name" value="P-loop containing nucleoside triphosphate hydrolases"/>
    <property type="match status" value="1"/>
</dbReference>
<dbReference type="SUPFAM" id="SSF54211">
    <property type="entry name" value="Ribosomal protein S5 domain 2-like"/>
    <property type="match status" value="1"/>
</dbReference>
<dbReference type="SUPFAM" id="SSF50447">
    <property type="entry name" value="Translation proteins"/>
    <property type="match status" value="1"/>
</dbReference>
<dbReference type="PROSITE" id="PS51722">
    <property type="entry name" value="G_TR_2"/>
    <property type="match status" value="1"/>
</dbReference>
<proteinExistence type="inferred from homology"/>